<name>Y1098_HAEIN</name>
<protein>
    <recommendedName>
        <fullName>Uncharacterized protein HI_1098</fullName>
    </recommendedName>
</protein>
<gene>
    <name type="ordered locus">HI_1098</name>
</gene>
<organism>
    <name type="scientific">Haemophilus influenzae (strain ATCC 51907 / DSM 11121 / KW20 / Rd)</name>
    <dbReference type="NCBI Taxonomy" id="71421"/>
    <lineage>
        <taxon>Bacteria</taxon>
        <taxon>Pseudomonadati</taxon>
        <taxon>Pseudomonadota</taxon>
        <taxon>Gammaproteobacteria</taxon>
        <taxon>Pasteurellales</taxon>
        <taxon>Pasteurellaceae</taxon>
        <taxon>Haemophilus</taxon>
    </lineage>
</organism>
<dbReference type="EMBL" id="L42023">
    <property type="protein sequence ID" value="AAC22754.1"/>
    <property type="molecule type" value="Genomic_DNA"/>
</dbReference>
<dbReference type="PIR" id="C64020">
    <property type="entry name" value="C64020"/>
</dbReference>
<dbReference type="SMR" id="P44111"/>
<dbReference type="EnsemblBacteria" id="AAC22754">
    <property type="protein sequence ID" value="AAC22754"/>
    <property type="gene ID" value="HI_1098"/>
</dbReference>
<dbReference type="KEGG" id="hin:HI_1098"/>
<dbReference type="HOGENOM" id="CLU_209065_0_0_6"/>
<dbReference type="Proteomes" id="UP000000579">
    <property type="component" value="Chromosome"/>
</dbReference>
<reference key="1">
    <citation type="journal article" date="1995" name="Science">
        <title>Whole-genome random sequencing and assembly of Haemophilus influenzae Rd.</title>
        <authorList>
            <person name="Fleischmann R.D."/>
            <person name="Adams M.D."/>
            <person name="White O."/>
            <person name="Clayton R.A."/>
            <person name="Kirkness E.F."/>
            <person name="Kerlavage A.R."/>
            <person name="Bult C.J."/>
            <person name="Tomb J.-F."/>
            <person name="Dougherty B.A."/>
            <person name="Merrick J.M."/>
            <person name="McKenney K."/>
            <person name="Sutton G.G."/>
            <person name="FitzHugh W."/>
            <person name="Fields C.A."/>
            <person name="Gocayne J.D."/>
            <person name="Scott J.D."/>
            <person name="Shirley R."/>
            <person name="Liu L.-I."/>
            <person name="Glodek A."/>
            <person name="Kelley J.M."/>
            <person name="Weidman J.F."/>
            <person name="Phillips C.A."/>
            <person name="Spriggs T."/>
            <person name="Hedblom E."/>
            <person name="Cotton M.D."/>
            <person name="Utterback T.R."/>
            <person name="Hanna M.C."/>
            <person name="Nguyen D.T."/>
            <person name="Saudek D.M."/>
            <person name="Brandon R.C."/>
            <person name="Fine L.D."/>
            <person name="Fritchman J.L."/>
            <person name="Fuhrmann J.L."/>
            <person name="Geoghagen N.S.M."/>
            <person name="Gnehm C.L."/>
            <person name="McDonald L.A."/>
            <person name="Small K.V."/>
            <person name="Fraser C.M."/>
            <person name="Smith H.O."/>
            <person name="Venter J.C."/>
        </authorList>
    </citation>
    <scope>NUCLEOTIDE SEQUENCE [LARGE SCALE GENOMIC DNA]</scope>
    <source>
        <strain>ATCC 51907 / DSM 11121 / KW20 / Rd</strain>
    </source>
</reference>
<keyword id="KW-1185">Reference proteome</keyword>
<accession>P44111</accession>
<sequence>MPVYSITDKDLSKRIQLKENKTLKEKTANYVSEGRAVLTDVICK</sequence>
<feature type="chain" id="PRO_0000078002" description="Uncharacterized protein HI_1098">
    <location>
        <begin position="1"/>
        <end position="44"/>
    </location>
</feature>
<proteinExistence type="predicted"/>